<accession>Q9QZH8</accession>
<feature type="chain" id="PRO_0000071545" description="Arylacetamide deacetylase">
    <location>
        <begin position="1"/>
        <end position="398"/>
    </location>
</feature>
<feature type="topological domain" description="Cytoplasmic" evidence="4">
    <location>
        <begin position="1"/>
        <end position="5"/>
    </location>
</feature>
<feature type="transmembrane region" description="Helical; Signal-anchor for type II membrane protein" evidence="4">
    <location>
        <begin position="6"/>
        <end position="26"/>
    </location>
</feature>
<feature type="topological domain" description="Lumenal" evidence="4">
    <location>
        <begin position="27"/>
        <end position="398"/>
    </location>
</feature>
<feature type="short sequence motif" description="Involved in the stabilization of the negatively charged intermediate by the formation of the oxyanion hole" evidence="2">
    <location>
        <begin position="110"/>
        <end position="112"/>
    </location>
</feature>
<feature type="active site" evidence="3 5">
    <location>
        <position position="188"/>
    </location>
</feature>
<feature type="active site" evidence="3">
    <location>
        <position position="342"/>
    </location>
</feature>
<feature type="active site" evidence="3">
    <location>
        <position position="372"/>
    </location>
</feature>
<feature type="glycosylation site" description="N-linked (GlcNAc...) asparagine" evidence="4">
    <location>
        <position position="77"/>
    </location>
</feature>
<feature type="glycosylation site" description="N-linked (GlcNAc...) asparagine" evidence="4">
    <location>
        <position position="192"/>
    </location>
</feature>
<feature type="glycosylation site" description="N-linked (GlcNAc...) asparagine" evidence="4">
    <location>
        <position position="281"/>
    </location>
</feature>
<feature type="glycosylation site" description="N-linked (GlcNAc...) asparagine" evidence="4">
    <location>
        <position position="324"/>
    </location>
</feature>
<feature type="disulfide bond" evidence="1">
    <location>
        <begin position="115"/>
        <end position="339"/>
    </location>
</feature>
<reference key="1">
    <citation type="journal article" date="2001" name="J. Biol. Chem.">
        <title>Characterization of the rodent genes for arylacetamide deacetylase, a putative microsomal lipase, and evidence for transcriptional regulation.</title>
        <authorList>
            <person name="Trickett J.I."/>
            <person name="Patel D.D."/>
            <person name="Knight B.L."/>
            <person name="Saggerson E.D."/>
            <person name="Gibbons G.F."/>
            <person name="Pease R.J."/>
        </authorList>
    </citation>
    <scope>NUCLEOTIDE SEQUENCE [GENOMIC DNA / MRNA]</scope>
    <source>
        <strain>Brown Norway</strain>
        <strain>Sprague-Dawley</strain>
        <tissue>Brain</tissue>
    </source>
</reference>
<reference key="2">
    <citation type="journal article" date="2012" name="Drug Metab. Dispos.">
        <title>Species differences in tissue distribution and enzyme activities of arylacetamide deacetylase in human, rat, and mouse.</title>
        <authorList>
            <person name="Kobayashi Y."/>
            <person name="Fukami T."/>
            <person name="Nakajima A."/>
            <person name="Watanabe A."/>
            <person name="Nakajima M."/>
            <person name="Yokoi T."/>
        </authorList>
    </citation>
    <scope>FUNCTION</scope>
    <scope>TISSUE SPECIFICITY</scope>
</reference>
<proteinExistence type="evidence at transcript level"/>
<protein>
    <recommendedName>
        <fullName>Arylacetamide deacetylase</fullName>
        <ecNumber>3.1.1.3</ecNumber>
    </recommendedName>
</protein>
<keyword id="KW-1015">Disulfide bond</keyword>
<keyword id="KW-0256">Endoplasmic reticulum</keyword>
<keyword id="KW-0325">Glycoprotein</keyword>
<keyword id="KW-0378">Hydrolase</keyword>
<keyword id="KW-0443">Lipid metabolism</keyword>
<keyword id="KW-0472">Membrane</keyword>
<keyword id="KW-0492">Microsome</keyword>
<keyword id="KW-1185">Reference proteome</keyword>
<keyword id="KW-0735">Signal-anchor</keyword>
<keyword id="KW-0812">Transmembrane</keyword>
<keyword id="KW-1133">Transmembrane helix</keyword>
<gene>
    <name type="primary">Aadac</name>
    <name type="synonym">Aada</name>
</gene>
<dbReference type="EC" id="3.1.1.3"/>
<dbReference type="EMBL" id="AF182426">
    <property type="protein sequence ID" value="AAD56394.1"/>
    <property type="molecule type" value="mRNA"/>
</dbReference>
<dbReference type="EMBL" id="AF264017">
    <property type="protein sequence ID" value="AAF74757.1"/>
    <property type="molecule type" value="Genomic_DNA"/>
</dbReference>
<dbReference type="RefSeq" id="NP_065413.1">
    <property type="nucleotide sequence ID" value="NM_020538.1"/>
</dbReference>
<dbReference type="SMR" id="Q9QZH8"/>
<dbReference type="FunCoup" id="Q9QZH8">
    <property type="interactions" value="25"/>
</dbReference>
<dbReference type="STRING" id="10116.ENSRNOP00000018761"/>
<dbReference type="ChEMBL" id="CHEMBL3509586"/>
<dbReference type="ESTHER" id="ratno-aryla">
    <property type="family name" value="Arylacetamide_deacetylase"/>
</dbReference>
<dbReference type="MEROPS" id="S09.991"/>
<dbReference type="GlyCosmos" id="Q9QZH8">
    <property type="glycosylation" value="4 sites, No reported glycans"/>
</dbReference>
<dbReference type="GlyGen" id="Q9QZH8">
    <property type="glycosylation" value="5 sites"/>
</dbReference>
<dbReference type="PhosphoSitePlus" id="Q9QZH8"/>
<dbReference type="PaxDb" id="10116-ENSRNOP00000064056"/>
<dbReference type="GeneID" id="57300"/>
<dbReference type="KEGG" id="rno:57300"/>
<dbReference type="UCSC" id="RGD:631440">
    <property type="organism name" value="rat"/>
</dbReference>
<dbReference type="AGR" id="RGD:631440"/>
<dbReference type="CTD" id="13"/>
<dbReference type="RGD" id="631440">
    <property type="gene designation" value="Aadac"/>
</dbReference>
<dbReference type="eggNOG" id="KOG1515">
    <property type="taxonomic scope" value="Eukaryota"/>
</dbReference>
<dbReference type="InParanoid" id="Q9QZH8"/>
<dbReference type="OrthoDB" id="44504at9989"/>
<dbReference type="PhylomeDB" id="Q9QZH8"/>
<dbReference type="Reactome" id="R-RNO-211945">
    <property type="pathway name" value="Phase I - Functionalization of compounds"/>
</dbReference>
<dbReference type="SABIO-RK" id="Q9QZH8"/>
<dbReference type="PRO" id="PR:Q9QZH8"/>
<dbReference type="Proteomes" id="UP000002494">
    <property type="component" value="Unplaced"/>
</dbReference>
<dbReference type="GO" id="GO:0005789">
    <property type="term" value="C:endoplasmic reticulum membrane"/>
    <property type="evidence" value="ECO:0000250"/>
    <property type="project" value="UniProtKB"/>
</dbReference>
<dbReference type="GO" id="GO:0019213">
    <property type="term" value="F:deacetylase activity"/>
    <property type="evidence" value="ECO:0000250"/>
    <property type="project" value="UniProtKB"/>
</dbReference>
<dbReference type="GO" id="GO:0017171">
    <property type="term" value="F:serine hydrolase activity"/>
    <property type="evidence" value="ECO:0000266"/>
    <property type="project" value="RGD"/>
</dbReference>
<dbReference type="GO" id="GO:0004806">
    <property type="term" value="F:triacylglycerol lipase activity"/>
    <property type="evidence" value="ECO:0000266"/>
    <property type="project" value="RGD"/>
</dbReference>
<dbReference type="GO" id="GO:0006629">
    <property type="term" value="P:lipid metabolic process"/>
    <property type="evidence" value="ECO:0007669"/>
    <property type="project" value="UniProtKB-KW"/>
</dbReference>
<dbReference type="GO" id="GO:0010898">
    <property type="term" value="P:positive regulation of triglyceride catabolic process"/>
    <property type="evidence" value="ECO:0000266"/>
    <property type="project" value="RGD"/>
</dbReference>
<dbReference type="Gene3D" id="3.40.50.1820">
    <property type="entry name" value="alpha/beta hydrolase"/>
    <property type="match status" value="1"/>
</dbReference>
<dbReference type="InterPro" id="IPR013094">
    <property type="entry name" value="AB_hydrolase_3"/>
</dbReference>
<dbReference type="InterPro" id="IPR029058">
    <property type="entry name" value="AB_hydrolase_fold"/>
</dbReference>
<dbReference type="InterPro" id="IPR017157">
    <property type="entry name" value="Arylacetamide_deacetylase"/>
</dbReference>
<dbReference type="InterPro" id="IPR050300">
    <property type="entry name" value="GDXG_lipolytic_enzyme"/>
</dbReference>
<dbReference type="InterPro" id="IPR002168">
    <property type="entry name" value="Lipase_GDXG_HIS_AS"/>
</dbReference>
<dbReference type="InterPro" id="IPR033140">
    <property type="entry name" value="Lipase_GDXG_put_SER_AS"/>
</dbReference>
<dbReference type="PANTHER" id="PTHR48081">
    <property type="entry name" value="AB HYDROLASE SUPERFAMILY PROTEIN C4A8.06C"/>
    <property type="match status" value="1"/>
</dbReference>
<dbReference type="PANTHER" id="PTHR48081:SF28">
    <property type="entry name" value="ALPHA_BETA HYDROLASE FOLD-3 DOMAIN-CONTAINING PROTEIN"/>
    <property type="match status" value="1"/>
</dbReference>
<dbReference type="Pfam" id="PF07859">
    <property type="entry name" value="Abhydrolase_3"/>
    <property type="match status" value="2"/>
</dbReference>
<dbReference type="PIRSF" id="PIRSF037251">
    <property type="entry name" value="Arylacetamide_deacetylase"/>
    <property type="match status" value="1"/>
</dbReference>
<dbReference type="SUPFAM" id="SSF53474">
    <property type="entry name" value="alpha/beta-Hydrolases"/>
    <property type="match status" value="1"/>
</dbReference>
<dbReference type="PROSITE" id="PS01173">
    <property type="entry name" value="LIPASE_GDXG_HIS"/>
    <property type="match status" value="1"/>
</dbReference>
<dbReference type="PROSITE" id="PS01174">
    <property type="entry name" value="LIPASE_GDXG_SER"/>
    <property type="match status" value="1"/>
</dbReference>
<evidence type="ECO:0000250" key="1"/>
<evidence type="ECO:0000250" key="2">
    <source>
        <dbReference type="UniProtKB" id="Q5NUF3"/>
    </source>
</evidence>
<evidence type="ECO:0000250" key="3">
    <source>
        <dbReference type="UniProtKB" id="Q8BLF1"/>
    </source>
</evidence>
<evidence type="ECO:0000255" key="4"/>
<evidence type="ECO:0000255" key="5">
    <source>
        <dbReference type="PROSITE-ProRule" id="PRU10038"/>
    </source>
</evidence>
<evidence type="ECO:0000269" key="6">
    <source>
    </source>
</evidence>
<evidence type="ECO:0000305" key="7"/>
<name>AAAD_RAT</name>
<organism>
    <name type="scientific">Rattus norvegicus</name>
    <name type="common">Rat</name>
    <dbReference type="NCBI Taxonomy" id="10116"/>
    <lineage>
        <taxon>Eukaryota</taxon>
        <taxon>Metazoa</taxon>
        <taxon>Chordata</taxon>
        <taxon>Craniata</taxon>
        <taxon>Vertebrata</taxon>
        <taxon>Euteleostomi</taxon>
        <taxon>Mammalia</taxon>
        <taxon>Eutheria</taxon>
        <taxon>Euarchontoglires</taxon>
        <taxon>Glires</taxon>
        <taxon>Rodentia</taxon>
        <taxon>Myomorpha</taxon>
        <taxon>Muroidea</taxon>
        <taxon>Muridae</taxon>
        <taxon>Murinae</taxon>
        <taxon>Rattus</taxon>
    </lineage>
</organism>
<sequence length="398" mass="45693">MGRTIFLLISVVLVAYYIYIPLPDDIEEPWKIILGNTLLKLGGDLASFGELLGLNHFMDTVQLFMRFQVVPPTSDENVTVMETDFNSVPVRIYIPKRKSTTLRRGLFFIHGGGWCLGSAAYFMYDTLSRRTAHRLDAVVVSTDYGLAPKYHFPKQFEDVYHSLRWFLQEDILEKYGVDPRRVGVSGDSAGGNLTAAVTQQILQDPDVKIKLKVQALIYPALQALDMNVPSQQENSQYPLLTRSLLIRFWSEYFTTDRDLEKAMLLNQHVPVEFSHLLQFVNWSSLLPQRYKKGYFYKTPTPGSLELAQKYPGFTDVKACPLLANDSILHHLPMTYIITCQYDVLRDDGLMYVKRLQNTGVHVTHHHIEDGFHGALTLPGLKITYRMQNQYLNWLHKNL</sequence>
<comment type="function">
    <text evidence="1 6">Displays cellular triglyceride lipase activity in liver, increases the levels of intracellular fatty acids derived from the hydrolysis of newly formed triglyceride stores and plays a role in very low-density lipoprotein assembly (By similarity). Displays serine esterase activity in liver. Deacetylates a variety of arylacetamide substrates, including xenobiotic compounds and procarcinogens, converting them to the primary arylamide compounds and increasing their toxicity.</text>
</comment>
<comment type="catalytic activity">
    <reaction>
        <text>a triacylglycerol + H2O = a diacylglycerol + a fatty acid + H(+)</text>
        <dbReference type="Rhea" id="RHEA:12044"/>
        <dbReference type="ChEBI" id="CHEBI:15377"/>
        <dbReference type="ChEBI" id="CHEBI:15378"/>
        <dbReference type="ChEBI" id="CHEBI:17855"/>
        <dbReference type="ChEBI" id="CHEBI:18035"/>
        <dbReference type="ChEBI" id="CHEBI:28868"/>
        <dbReference type="EC" id="3.1.1.3"/>
    </reaction>
</comment>
<comment type="subcellular location">
    <subcellularLocation>
        <location evidence="1">Endoplasmic reticulum membrane</location>
        <topology evidence="1">Single-pass type II membrane protein</topology>
    </subcellularLocation>
    <subcellularLocation>
        <location evidence="1">Microsome membrane</location>
        <topology evidence="1">Single-pass type II membrane protein</topology>
    </subcellularLocation>
</comment>
<comment type="tissue specificity">
    <text evidence="6">Highest levels in liver with lower levels in jejunum, kidney and testis.</text>
</comment>
<comment type="similarity">
    <text evidence="7">Belongs to the 'GDXG' lipolytic enzyme family.</text>
</comment>